<proteinExistence type="evidence at protein level"/>
<reference key="1">
    <citation type="journal article" date="2008" name="PLoS Genet.">
        <title>Genomic islands in the pathogenic filamentous fungus Aspergillus fumigatus.</title>
        <authorList>
            <person name="Fedorova N.D."/>
            <person name="Khaldi N."/>
            <person name="Joardar V.S."/>
            <person name="Maiti R."/>
            <person name="Amedeo P."/>
            <person name="Anderson M.J."/>
            <person name="Crabtree J."/>
            <person name="Silva J.C."/>
            <person name="Badger J.H."/>
            <person name="Albarraq A."/>
            <person name="Angiuoli S."/>
            <person name="Bussey H."/>
            <person name="Bowyer P."/>
            <person name="Cotty P.J."/>
            <person name="Dyer P.S."/>
            <person name="Egan A."/>
            <person name="Galens K."/>
            <person name="Fraser-Liggett C.M."/>
            <person name="Haas B.J."/>
            <person name="Inman J.M."/>
            <person name="Kent R."/>
            <person name="Lemieux S."/>
            <person name="Malavazi I."/>
            <person name="Orvis J."/>
            <person name="Roemer T."/>
            <person name="Ronning C.M."/>
            <person name="Sundaram J.P."/>
            <person name="Sutton G."/>
            <person name="Turner G."/>
            <person name="Venter J.C."/>
            <person name="White O.R."/>
            <person name="Whitty B.R."/>
            <person name="Youngman P."/>
            <person name="Wolfe K.H."/>
            <person name="Goldman G.H."/>
            <person name="Wortman J.R."/>
            <person name="Jiang B."/>
            <person name="Denning D.W."/>
            <person name="Nierman W.C."/>
        </authorList>
    </citation>
    <scope>NUCLEOTIDE SEQUENCE [LARGE SCALE GENOMIC DNA]</scope>
    <source>
        <strain>CBS 144.89 / FGSC A1163 / CEA10</strain>
    </source>
</reference>
<reference key="2">
    <citation type="journal article" date="2020" name="Nat. Commun.">
        <title>The negative cofactor 2 complex is a key regulator of drug resistance in Aspergillus fumigatus.</title>
        <authorList>
            <person name="Furukawa T."/>
            <person name="van Rhijn N."/>
            <person name="Fraczek M."/>
            <person name="Gsaller F."/>
            <person name="Davies E."/>
            <person name="Carr P."/>
            <person name="Gago S."/>
            <person name="Fortune-Grant R."/>
            <person name="Rahman S."/>
            <person name="Gilsenan J.M."/>
            <person name="Houlder E."/>
            <person name="Kowalski C.H."/>
            <person name="Raj S."/>
            <person name="Paul S."/>
            <person name="Cook P."/>
            <person name="Parker J.E."/>
            <person name="Kelly S."/>
            <person name="Cramer R.A."/>
            <person name="Latge J.P."/>
            <person name="Moye-Rowley S."/>
            <person name="Bignell E."/>
            <person name="Bowyer P."/>
            <person name="Bromley M.J."/>
        </authorList>
    </citation>
    <scope>FUNCTION</scope>
    <scope>INTERACTION WITH NCTA AND NCTB</scope>
    <scope>SUBCELLULAR LOCATION</scope>
</reference>
<sequence length="1891" mass="210209">MTSRLLETGSTPFIRNTAAQQLADVQKQHPDELFNLLGRILPYLRSKSWDTRAAAAKAIGLIVANADTFDPNQDDGQEIKKAENDDLDVDIKSEEELLSPMDDSLLQLERLDLPSILKYGKRLLGSAGKEYEYSLAAMDPASRLQHQKKTLTSRLGLAGEYIEEDLINDNDLVSKPVVKEEPSFVASREHSIQGTSQPLASPIEPANGEESGLSKRQLNQLKRKNKQSARMGANKVRVVDLSSRRASENVTTPSVATPYPIKSENGEERNGDSKPDYFSLDRSAGDDESKIVSEFKGASVPENPLLQPESTEEGPNPNWPFELMCDILMVDLFDPNWEIRHGAAMALREVIRIQGAGAGRVQGKSRAENDILNRKWLDDLACRLLCVLMLDRFGDYISDNVVAPIRETVGQTLGALLSQLPSRSVISVYKCLYRIIMQTDLGLERPIWEVCHGGMIGLRYLVAVRKDLLIKDSKLMDGVLEAVMKGLGDYDDDVRAVSAATLVPIAEEFVKTRQSTLGTLMTIVWDCLSNLQDDLSASTGSVMDLLAKLCTFQEVLDAMKANAAVNPESSFGKLVPRLYPFLRHTITSVRSAVLRALMTFLQLEGEGTDEWVDGKTVRLIFQNLLVERNEGVLKQSLQVWSELLNSLETRGSFKSESDLLSHIKPLITLSMGPFGVPRYPVPMDASLFIKPSGLPFPSSAAAPARSSPASNTPEGTKGRRRKSEKKEAPPPSAHNVDGHMLQGDIDLVGADTMLRSKIYAARALGQLLFVWDQNQLPSLWQSILEGLNHSASTSQLASAMIVEEYAKLSGPSGRYASTLCENLRPIIEGERPPWYSDIACYLHVARAQCHSLLNTFRDHAHVPGSRLPVLAVIVQGDPEAGPNAFSLSDAEKVIGPDFERLKKGLTPAQRITALQVLNDTRATAESAVNEARNVREQRDLRVRAAAAGALVALSDIPKKPSHIIKGMMDSIKKEENAELQQRSATAITSLVEYYTTSAKRGPVDKVIGNLVKYCCVDTSETPEFHHNAMLEKSILSLRKEEDRRDHPDAAKFEREAKEARIMRRGAKEALEQLAVKFGSELMAKVPNLASLIERPLKEALAADELPANIRDPENELGQEVVDGLSTLRAILPKFHSGLYPWVVDLLPLVVKALQCKLSVIRYAAAKCFATICSVITVEGMTMLVEKVLPMINDALDVHHRQGAVECIYHLIHVMEDGILPYVIFLVVPVLGRMSDSDNEVRLLATTSFATLVKLVPLEAGIPDPPGLSEELLKGRDRERQFMAQMLDVRKVEEFKIPVAIKAELRPYQQEGVNWLAFLNRYNLHGILCDDMGLGKTLQTICIVASDHHMRAEEFARTQKPEVRKLPSLIVCPPSLSGHWQQELKQYAPFLNCVAYVGPPAERSRLQSALPNADIVVTSYDICRNDNEVLNPINWNYCVLDEGHLIKNPKAKATIAVKRLLSNHRLILSGTPIQNNVLELWSLFDFLMPGFLGTEKVFLDRFAKPIAASRFSKSSSKEQEAGALAIEALHKQVLPFLLRRLKEEVLNDLPPKIIQNYYCDPSELQRKLFEDFTKKEQKALQDKVGSTEKADKEHIFQALQYMRRLCNSPALVVKEGHKQYNEVQQYLAAKHSNIRDVAHAPKLSALRDLLIDCGIGVDSPSEGDLSGASYVSPHRALIFCQMKEMLDIVQSEVFNKLLPSVQFLRLDGSVEATRRQDIVNRFNTDPSYDVLLLTTSVGGLGLNLTGADTVIFVEHDWNPQKDIQAMDRAHRIGQKKVVNVYRLITRGTLEEKILNLQRFKIDVASTVVNQQNAGLGTMDTDQLLDLFNLGETAETAEKPSDAAGNEVDMVDIDGNVKEKGKKGWLDDLGELWDDRQYQEEYNLDSFLATMKG</sequence>
<organism>
    <name type="scientific">Aspergillus fumigatus (strain CBS 144.89 / FGSC A1163 / CEA10)</name>
    <name type="common">Neosartorya fumigata</name>
    <dbReference type="NCBI Taxonomy" id="451804"/>
    <lineage>
        <taxon>Eukaryota</taxon>
        <taxon>Fungi</taxon>
        <taxon>Dikarya</taxon>
        <taxon>Ascomycota</taxon>
        <taxon>Pezizomycotina</taxon>
        <taxon>Eurotiomycetes</taxon>
        <taxon>Eurotiomycetidae</taxon>
        <taxon>Eurotiales</taxon>
        <taxon>Aspergillaceae</taxon>
        <taxon>Aspergillus</taxon>
        <taxon>Aspergillus subgen. Fumigati</taxon>
    </lineage>
</organism>
<accession>B0XPE7</accession>
<name>BTAF1_ASPFC</name>
<dbReference type="EC" id="3.6.4.-" evidence="1"/>
<dbReference type="EMBL" id="DS499594">
    <property type="protein sequence ID" value="EDP55920.1"/>
    <property type="molecule type" value="Genomic_DNA"/>
</dbReference>
<dbReference type="SMR" id="B0XPE7"/>
<dbReference type="EnsemblFungi" id="EDP55920">
    <property type="protein sequence ID" value="EDP55920"/>
    <property type="gene ID" value="AFUB_006220"/>
</dbReference>
<dbReference type="VEuPathDB" id="FungiDB:AFUB_006220"/>
<dbReference type="HOGENOM" id="CLU_000315_1_0_1"/>
<dbReference type="OrthoDB" id="50450at5052"/>
<dbReference type="PhylomeDB" id="B0XPE7"/>
<dbReference type="Proteomes" id="UP000001699">
    <property type="component" value="Unassembled WGS sequence"/>
</dbReference>
<dbReference type="GO" id="GO:0000228">
    <property type="term" value="C:nuclear chromosome"/>
    <property type="evidence" value="ECO:0007669"/>
    <property type="project" value="EnsemblFungi"/>
</dbReference>
<dbReference type="GO" id="GO:0005667">
    <property type="term" value="C:transcription regulator complex"/>
    <property type="evidence" value="ECO:0007669"/>
    <property type="project" value="EnsemblFungi"/>
</dbReference>
<dbReference type="GO" id="GO:0005524">
    <property type="term" value="F:ATP binding"/>
    <property type="evidence" value="ECO:0007669"/>
    <property type="project" value="UniProtKB-KW"/>
</dbReference>
<dbReference type="GO" id="GO:0016887">
    <property type="term" value="F:ATP hydrolysis activity"/>
    <property type="evidence" value="ECO:0007669"/>
    <property type="project" value="EnsemblFungi"/>
</dbReference>
<dbReference type="GO" id="GO:0003677">
    <property type="term" value="F:DNA binding"/>
    <property type="evidence" value="ECO:0007669"/>
    <property type="project" value="UniProtKB-KW"/>
</dbReference>
<dbReference type="GO" id="GO:0004386">
    <property type="term" value="F:helicase activity"/>
    <property type="evidence" value="ECO:0007669"/>
    <property type="project" value="UniProtKB-KW"/>
</dbReference>
<dbReference type="GO" id="GO:0017025">
    <property type="term" value="F:TBP-class protein binding"/>
    <property type="evidence" value="ECO:0007669"/>
    <property type="project" value="EnsemblFungi"/>
</dbReference>
<dbReference type="GO" id="GO:0045892">
    <property type="term" value="P:negative regulation of DNA-templated transcription"/>
    <property type="evidence" value="ECO:0007669"/>
    <property type="project" value="EnsemblFungi"/>
</dbReference>
<dbReference type="GO" id="GO:0042790">
    <property type="term" value="P:nucleolar large rRNA transcription by RNA polymerase I"/>
    <property type="evidence" value="ECO:0007669"/>
    <property type="project" value="EnsemblFungi"/>
</dbReference>
<dbReference type="GO" id="GO:0045898">
    <property type="term" value="P:regulation of RNA polymerase II transcription preinitiation complex assembly"/>
    <property type="evidence" value="ECO:0007669"/>
    <property type="project" value="EnsemblFungi"/>
</dbReference>
<dbReference type="GO" id="GO:0006364">
    <property type="term" value="P:rRNA processing"/>
    <property type="evidence" value="ECO:0007669"/>
    <property type="project" value="EnsemblFungi"/>
</dbReference>
<dbReference type="CDD" id="cd17999">
    <property type="entry name" value="DEXHc_Mot1"/>
    <property type="match status" value="1"/>
</dbReference>
<dbReference type="CDD" id="cd18793">
    <property type="entry name" value="SF2_C_SNF"/>
    <property type="match status" value="1"/>
</dbReference>
<dbReference type="FunFam" id="3.40.50.10810:FF:000009">
    <property type="entry name" value="B-TFIID TATA-box-binding protein-associated factor 1"/>
    <property type="match status" value="1"/>
</dbReference>
<dbReference type="FunFam" id="1.25.10.10:FF:000508">
    <property type="entry name" value="Probable helicase mot1"/>
    <property type="match status" value="1"/>
</dbReference>
<dbReference type="FunFam" id="1.25.10.10:FF:000445">
    <property type="entry name" value="Related to MOT1-transcriptional accessory protein"/>
    <property type="match status" value="1"/>
</dbReference>
<dbReference type="FunFam" id="3.40.50.300:FF:000428">
    <property type="entry name" value="TATA-binding protein-associated factor 172"/>
    <property type="match status" value="1"/>
</dbReference>
<dbReference type="Gene3D" id="1.25.10.10">
    <property type="entry name" value="Leucine-rich Repeat Variant"/>
    <property type="match status" value="2"/>
</dbReference>
<dbReference type="Gene3D" id="3.40.50.300">
    <property type="entry name" value="P-loop containing nucleotide triphosphate hydrolases"/>
    <property type="match status" value="1"/>
</dbReference>
<dbReference type="Gene3D" id="3.40.50.10810">
    <property type="entry name" value="Tandem AAA-ATPase domain"/>
    <property type="match status" value="1"/>
</dbReference>
<dbReference type="InterPro" id="IPR011989">
    <property type="entry name" value="ARM-like"/>
</dbReference>
<dbReference type="InterPro" id="IPR016024">
    <property type="entry name" value="ARM-type_fold"/>
</dbReference>
<dbReference type="InterPro" id="IPR014001">
    <property type="entry name" value="Helicase_ATP-bd"/>
</dbReference>
<dbReference type="InterPro" id="IPR001650">
    <property type="entry name" value="Helicase_C-like"/>
</dbReference>
<dbReference type="InterPro" id="IPR044972">
    <property type="entry name" value="Mot1"/>
</dbReference>
<dbReference type="InterPro" id="IPR044078">
    <property type="entry name" value="Mot1_ATP-bd"/>
</dbReference>
<dbReference type="InterPro" id="IPR022707">
    <property type="entry name" value="Mot1_central_dom"/>
</dbReference>
<dbReference type="InterPro" id="IPR027417">
    <property type="entry name" value="P-loop_NTPase"/>
</dbReference>
<dbReference type="InterPro" id="IPR038718">
    <property type="entry name" value="SNF2-like_sf"/>
</dbReference>
<dbReference type="InterPro" id="IPR049730">
    <property type="entry name" value="SNF2/RAD54-like_C"/>
</dbReference>
<dbReference type="InterPro" id="IPR000330">
    <property type="entry name" value="SNF2_N"/>
</dbReference>
<dbReference type="PANTHER" id="PTHR36498">
    <property type="entry name" value="TATA-BINDING PROTEIN-ASSOCIATED FACTOR 172"/>
    <property type="match status" value="1"/>
</dbReference>
<dbReference type="PANTHER" id="PTHR36498:SF1">
    <property type="entry name" value="TATA-BINDING PROTEIN-ASSOCIATED FACTOR 172"/>
    <property type="match status" value="1"/>
</dbReference>
<dbReference type="Pfam" id="PF12054">
    <property type="entry name" value="DUF3535"/>
    <property type="match status" value="1"/>
</dbReference>
<dbReference type="Pfam" id="PF00271">
    <property type="entry name" value="Helicase_C"/>
    <property type="match status" value="1"/>
</dbReference>
<dbReference type="Pfam" id="PF00176">
    <property type="entry name" value="SNF2-rel_dom"/>
    <property type="match status" value="1"/>
</dbReference>
<dbReference type="SMART" id="SM00487">
    <property type="entry name" value="DEXDc"/>
    <property type="match status" value="1"/>
</dbReference>
<dbReference type="SMART" id="SM00490">
    <property type="entry name" value="HELICc"/>
    <property type="match status" value="1"/>
</dbReference>
<dbReference type="SUPFAM" id="SSF48371">
    <property type="entry name" value="ARM repeat"/>
    <property type="match status" value="1"/>
</dbReference>
<dbReference type="SUPFAM" id="SSF52540">
    <property type="entry name" value="P-loop containing nucleoside triphosphate hydrolases"/>
    <property type="match status" value="2"/>
</dbReference>
<dbReference type="PROSITE" id="PS51192">
    <property type="entry name" value="HELICASE_ATP_BIND_1"/>
    <property type="match status" value="1"/>
</dbReference>
<dbReference type="PROSITE" id="PS51194">
    <property type="entry name" value="HELICASE_CTER"/>
    <property type="match status" value="1"/>
</dbReference>
<evidence type="ECO:0000250" key="1">
    <source>
        <dbReference type="UniProtKB" id="P32333"/>
    </source>
</evidence>
<evidence type="ECO:0000255" key="2"/>
<evidence type="ECO:0000255" key="3">
    <source>
        <dbReference type="PROSITE-ProRule" id="PRU00541"/>
    </source>
</evidence>
<evidence type="ECO:0000255" key="4">
    <source>
        <dbReference type="PROSITE-ProRule" id="PRU00542"/>
    </source>
</evidence>
<evidence type="ECO:0000256" key="5">
    <source>
        <dbReference type="SAM" id="MobiDB-lite"/>
    </source>
</evidence>
<evidence type="ECO:0000269" key="6">
    <source>
    </source>
</evidence>
<evidence type="ECO:0000303" key="7">
    <source>
    </source>
</evidence>
<evidence type="ECO:0000305" key="8"/>
<evidence type="ECO:0000305" key="9">
    <source>
    </source>
</evidence>
<comment type="function">
    <text evidence="1 6">Regulates transcription in association with TATA binding protein (TBP). Removes TBP from the TATA box via its C-terminal ATPase activity. Both transcription activation and repression require its ATPase activity (By similarity). Part of the NCT transcriptional regulatory complex that acts as a key regulator of ergosterol biosynthesis and the azole exporter cdr1B (PubMed:31969561). The NCT complex binds the promoters of genes linked to azole susceptibility, and especially represses the expression of cdr1B transporter (PubMed:31969561).</text>
</comment>
<comment type="subunit">
    <text evidence="6">Forms the NCT transcriptional regulatory complex with nctA and nctB.</text>
</comment>
<comment type="subcellular location">
    <subcellularLocation>
        <location evidence="9">Nucleus</location>
    </subcellularLocation>
</comment>
<comment type="similarity">
    <text evidence="8">Belongs to the SNF2/RAD54 helicase family.</text>
</comment>
<feature type="chain" id="PRO_0000449617" description="TATA-binding protein-associated factor mot1">
    <location>
        <begin position="1"/>
        <end position="1891"/>
    </location>
</feature>
<feature type="repeat" description="HEAT 1" evidence="2">
    <location>
        <begin position="30"/>
        <end position="68"/>
    </location>
</feature>
<feature type="repeat" description="HEAT 2" evidence="2">
    <location>
        <begin position="473"/>
        <end position="511"/>
    </location>
</feature>
<feature type="repeat" description="HEAT 3" evidence="2">
    <location>
        <begin position="569"/>
        <end position="606"/>
    </location>
</feature>
<feature type="repeat" description="HEAT 4" evidence="2">
    <location>
        <begin position="957"/>
        <end position="996"/>
    </location>
</feature>
<feature type="repeat" description="HEAT 5" evidence="2">
    <location>
        <begin position="1139"/>
        <end position="1177"/>
    </location>
</feature>
<feature type="repeat" description="HEAT 6" evidence="2">
    <location>
        <begin position="1181"/>
        <end position="1216"/>
    </location>
</feature>
<feature type="repeat" description="HEAT 7" evidence="2">
    <location>
        <begin position="1219"/>
        <end position="1257"/>
    </location>
</feature>
<feature type="domain" description="Helicase ATP-binding" evidence="3">
    <location>
        <begin position="1316"/>
        <end position="1489"/>
    </location>
</feature>
<feature type="repeat" description="HEAT 8" evidence="2">
    <location>
        <begin position="1526"/>
        <end position="1565"/>
    </location>
</feature>
<feature type="domain" description="Helicase C-terminal" evidence="4">
    <location>
        <begin position="1663"/>
        <end position="1813"/>
    </location>
</feature>
<feature type="region of interest" description="Disordered" evidence="5">
    <location>
        <begin position="184"/>
        <end position="216"/>
    </location>
</feature>
<feature type="region of interest" description="Disordered" evidence="5">
    <location>
        <begin position="241"/>
        <end position="283"/>
    </location>
</feature>
<feature type="region of interest" description="Disordered" evidence="5">
    <location>
        <begin position="295"/>
        <end position="316"/>
    </location>
</feature>
<feature type="region of interest" description="Disordered" evidence="5">
    <location>
        <begin position="699"/>
        <end position="740"/>
    </location>
</feature>
<feature type="short sequence motif" description="DEAH box" evidence="3">
    <location>
        <begin position="1440"/>
        <end position="1443"/>
    </location>
</feature>
<feature type="compositionally biased region" description="Basic and acidic residues" evidence="5">
    <location>
        <begin position="264"/>
        <end position="275"/>
    </location>
</feature>
<feature type="compositionally biased region" description="Low complexity" evidence="5">
    <location>
        <begin position="699"/>
        <end position="710"/>
    </location>
</feature>
<feature type="binding site" evidence="3">
    <location>
        <begin position="1329"/>
        <end position="1336"/>
    </location>
    <ligand>
        <name>ATP</name>
        <dbReference type="ChEBI" id="CHEBI:30616"/>
    </ligand>
</feature>
<keyword id="KW-0067">ATP-binding</keyword>
<keyword id="KW-0238">DNA-binding</keyword>
<keyword id="KW-0347">Helicase</keyword>
<keyword id="KW-0378">Hydrolase</keyword>
<keyword id="KW-0547">Nucleotide-binding</keyword>
<keyword id="KW-0539">Nucleus</keyword>
<keyword id="KW-0677">Repeat</keyword>
<keyword id="KW-0804">Transcription</keyword>
<keyword id="KW-0805">Transcription regulation</keyword>
<gene>
    <name evidence="7" type="primary">mot1</name>
    <name type="ORF">AFUB_006220</name>
</gene>
<protein>
    <recommendedName>
        <fullName evidence="1">TATA-binding protein-associated factor mot1</fullName>
        <shortName evidence="1">TBP-associated factor mot1</shortName>
        <ecNumber evidence="1">3.6.4.-</ecNumber>
    </recommendedName>
    <alternativeName>
        <fullName evidence="1">Modifier of transcription 1</fullName>
    </alternativeName>
    <alternativeName>
        <fullName evidence="7">NCT transcriptional regulatory complex subunit mot1</fullName>
    </alternativeName>
</protein>